<comment type="function">
    <text evidence="4">Transcriptional repressor with a role in dorsal axis formation and neural plate expansion; maintains an undifferentiated neural ectoderm after neural induction.</text>
</comment>
<comment type="subcellular location">
    <subcellularLocation>
        <location evidence="1 4">Nucleus</location>
    </subcellularLocation>
</comment>
<comment type="tissue specificity">
    <text evidence="3 4">Maternal expression is localized to the animal hemisphere of the cleavage embryo. In pre-gastrula embryos, zygotic expression begins in the presumptive neural ectoderm. During gastrulation, expression is confined to the superficial layer of cells in the dorsal blastopore lip (Spemann organizer). Also expressed at a lower level in the paraxial mesoderm but not in the notochord. Expression is subsequently lost until after neural tube closure when expression re-initiates in the tailtip within the entire neural tube and paraxial mesoderm, but not in the notochord.</text>
</comment>
<comment type="developmental stage">
    <text evidence="3 4">Expressed both maternally and zygotically. First expressed at stage II of oogenesis. Maternal expression levels are low and become further reduced after fertilization. Zygotic expression begins at the mid-blastula transition and peaks during the gastrula/neurula stages. A lower level of expression is then maintained during tailbud and later stages.</text>
</comment>
<comment type="induction">
    <text evidence="4">Strongly by siamois, moderately by cer1 and weakly by wnt8 and nog.</text>
</comment>
<dbReference type="EMBL" id="AJ242676">
    <property type="protein sequence ID" value="CAB44728.1"/>
    <property type="molecule type" value="mRNA"/>
</dbReference>
<dbReference type="EMBL" id="AF162782">
    <property type="protein sequence ID" value="AAD47811.1"/>
    <property type="molecule type" value="mRNA"/>
</dbReference>
<dbReference type="EMBL" id="AJ850135">
    <property type="protein sequence ID" value="CAH64537.1"/>
    <property type="molecule type" value="Genomic_DNA"/>
</dbReference>
<dbReference type="SMR" id="Q9PRJ8"/>
<dbReference type="GeneID" id="398170"/>
<dbReference type="KEGG" id="xla:398170"/>
<dbReference type="AGR" id="Xenbase:XB-GENE-865254"/>
<dbReference type="CTD" id="398170"/>
<dbReference type="Xenbase" id="XB-GENE-865254">
    <property type="gene designation" value="foxd4l1.S"/>
</dbReference>
<dbReference type="OrthoDB" id="5402974at2759"/>
<dbReference type="Proteomes" id="UP000186698">
    <property type="component" value="Chromosome 1S"/>
</dbReference>
<dbReference type="Bgee" id="398170">
    <property type="expression patterns" value="Expressed in gastrula and 2 other cell types or tissues"/>
</dbReference>
<dbReference type="GO" id="GO:0005634">
    <property type="term" value="C:nucleus"/>
    <property type="evidence" value="ECO:0000314"/>
    <property type="project" value="UniProtKB"/>
</dbReference>
<dbReference type="GO" id="GO:0003677">
    <property type="term" value="F:DNA binding"/>
    <property type="evidence" value="ECO:0000303"/>
    <property type="project" value="UniProtKB"/>
</dbReference>
<dbReference type="GO" id="GO:0003700">
    <property type="term" value="F:DNA-binding transcription factor activity"/>
    <property type="evidence" value="ECO:0000303"/>
    <property type="project" value="UniProtKB"/>
</dbReference>
<dbReference type="GO" id="GO:0000981">
    <property type="term" value="F:DNA-binding transcription factor activity, RNA polymerase II-specific"/>
    <property type="evidence" value="ECO:0000318"/>
    <property type="project" value="GO_Central"/>
</dbReference>
<dbReference type="GO" id="GO:0000978">
    <property type="term" value="F:RNA polymerase II cis-regulatory region sequence-specific DNA binding"/>
    <property type="evidence" value="ECO:0000318"/>
    <property type="project" value="GO_Central"/>
</dbReference>
<dbReference type="GO" id="GO:0009653">
    <property type="term" value="P:anatomical structure morphogenesis"/>
    <property type="evidence" value="ECO:0000318"/>
    <property type="project" value="GO_Central"/>
</dbReference>
<dbReference type="GO" id="GO:0030154">
    <property type="term" value="P:cell differentiation"/>
    <property type="evidence" value="ECO:0000318"/>
    <property type="project" value="GO_Central"/>
</dbReference>
<dbReference type="GO" id="GO:0009953">
    <property type="term" value="P:dorsal/ventral pattern formation"/>
    <property type="evidence" value="ECO:0000315"/>
    <property type="project" value="UniProtKB"/>
</dbReference>
<dbReference type="GO" id="GO:0045892">
    <property type="term" value="P:negative regulation of DNA-templated transcription"/>
    <property type="evidence" value="ECO:0000314"/>
    <property type="project" value="UniProtKB"/>
</dbReference>
<dbReference type="GO" id="GO:0007399">
    <property type="term" value="P:nervous system development"/>
    <property type="evidence" value="ECO:0007669"/>
    <property type="project" value="UniProtKB-KW"/>
</dbReference>
<dbReference type="GO" id="GO:0001840">
    <property type="term" value="P:neural plate development"/>
    <property type="evidence" value="ECO:0000315"/>
    <property type="project" value="UniProtKB"/>
</dbReference>
<dbReference type="GO" id="GO:0006355">
    <property type="term" value="P:regulation of DNA-templated transcription"/>
    <property type="evidence" value="ECO:0000303"/>
    <property type="project" value="UniProtKB"/>
</dbReference>
<dbReference type="GO" id="GO:0006357">
    <property type="term" value="P:regulation of transcription by RNA polymerase II"/>
    <property type="evidence" value="ECO:0000318"/>
    <property type="project" value="GO_Central"/>
</dbReference>
<dbReference type="CDD" id="cd20048">
    <property type="entry name" value="FH_FOXD4-like"/>
    <property type="match status" value="1"/>
</dbReference>
<dbReference type="FunFam" id="1.10.10.10:FF:000016">
    <property type="entry name" value="Forkhead box protein I1"/>
    <property type="match status" value="1"/>
</dbReference>
<dbReference type="Gene3D" id="1.10.10.10">
    <property type="entry name" value="Winged helix-like DNA-binding domain superfamily/Winged helix DNA-binding domain"/>
    <property type="match status" value="1"/>
</dbReference>
<dbReference type="InterPro" id="IPR001766">
    <property type="entry name" value="Fork_head_dom"/>
</dbReference>
<dbReference type="InterPro" id="IPR050211">
    <property type="entry name" value="FOX_domain-containing"/>
</dbReference>
<dbReference type="InterPro" id="IPR018122">
    <property type="entry name" value="TF_fork_head_CS_1"/>
</dbReference>
<dbReference type="InterPro" id="IPR030456">
    <property type="entry name" value="TF_fork_head_CS_2"/>
</dbReference>
<dbReference type="InterPro" id="IPR036388">
    <property type="entry name" value="WH-like_DNA-bd_sf"/>
</dbReference>
<dbReference type="InterPro" id="IPR036390">
    <property type="entry name" value="WH_DNA-bd_sf"/>
</dbReference>
<dbReference type="PANTHER" id="PTHR11829">
    <property type="entry name" value="FORKHEAD BOX PROTEIN"/>
    <property type="match status" value="1"/>
</dbReference>
<dbReference type="PANTHER" id="PTHR11829:SF401">
    <property type="entry name" value="FORKHEAD BOX PROTEIN D5"/>
    <property type="match status" value="1"/>
</dbReference>
<dbReference type="Pfam" id="PF00250">
    <property type="entry name" value="Forkhead"/>
    <property type="match status" value="1"/>
</dbReference>
<dbReference type="PRINTS" id="PR00053">
    <property type="entry name" value="FORKHEAD"/>
</dbReference>
<dbReference type="SMART" id="SM00339">
    <property type="entry name" value="FH"/>
    <property type="match status" value="1"/>
</dbReference>
<dbReference type="SUPFAM" id="SSF46785">
    <property type="entry name" value="Winged helix' DNA-binding domain"/>
    <property type="match status" value="1"/>
</dbReference>
<dbReference type="PROSITE" id="PS00657">
    <property type="entry name" value="FORK_HEAD_1"/>
    <property type="match status" value="1"/>
</dbReference>
<dbReference type="PROSITE" id="PS00658">
    <property type="entry name" value="FORK_HEAD_2"/>
    <property type="match status" value="1"/>
</dbReference>
<dbReference type="PROSITE" id="PS50039">
    <property type="entry name" value="FORK_HEAD_3"/>
    <property type="match status" value="1"/>
</dbReference>
<accession>Q9PRJ8</accession>
<evidence type="ECO:0000255" key="1">
    <source>
        <dbReference type="PROSITE-ProRule" id="PRU00089"/>
    </source>
</evidence>
<evidence type="ECO:0000256" key="2">
    <source>
        <dbReference type="SAM" id="MobiDB-lite"/>
    </source>
</evidence>
<evidence type="ECO:0000269" key="3">
    <source>
    </source>
</evidence>
<evidence type="ECO:0000269" key="4">
    <source>
    </source>
</evidence>
<evidence type="ECO:0000305" key="5"/>
<evidence type="ECO:0000312" key="6">
    <source>
        <dbReference type="EMBL" id="AAD47811.1"/>
    </source>
</evidence>
<evidence type="ECO:0000312" key="7">
    <source>
        <dbReference type="EMBL" id="CAB44728.1"/>
    </source>
</evidence>
<evidence type="ECO:0000312" key="8">
    <source>
        <dbReference type="EMBL" id="CAH64537.1"/>
    </source>
</evidence>
<protein>
    <recommendedName>
        <fullName>Forkhead box protein D5-A</fullName>
        <shortName>FoxD5-A</shortName>
        <shortName>FoxD5a</shortName>
    </recommendedName>
    <alternativeName>
        <fullName>Fork head domain-related protein 12</fullName>
        <shortName>xFD-12</shortName>
    </alternativeName>
    <alternativeName>
        <fullName>XlFoxD5a</fullName>
    </alternativeName>
</protein>
<reference evidence="5 7" key="1">
    <citation type="journal article" date="1999" name="Mech. Dev.">
        <title>Characterization of a subfamily of related winged helix genes, XFD-12/12'/12'' (XFLIP), during Xenopus embryogenesis.</title>
        <authorList>
            <person name="Soelter M."/>
            <person name="Koester M."/>
            <person name="Hollemann T."/>
            <person name="Brey A."/>
            <person name="Pieler T."/>
            <person name="Knoechel W."/>
        </authorList>
    </citation>
    <scope>NUCLEOTIDE SEQUENCE [MRNA]</scope>
    <scope>TISSUE SPECIFICITY</scope>
    <scope>DEVELOPMENTAL STAGE</scope>
    <source>
        <tissue evidence="3">Gastrula</tissue>
    </source>
</reference>
<reference evidence="5 6" key="2">
    <citation type="journal article" date="2001" name="Dev. Biol.">
        <title>foxD5a, a Xenopus winged helix gene, maintains an immature neural ectoderm via transcriptional repression that is dependent on the C-terminal domain.</title>
        <authorList>
            <person name="Sullivan S.A."/>
            <person name="Akers L."/>
            <person name="Moody S.A."/>
        </authorList>
    </citation>
    <scope>NUCLEOTIDE SEQUENCE [MRNA]</scope>
    <scope>FUNCTION</scope>
    <scope>SUBCELLULAR LOCATION</scope>
    <scope>TISSUE SPECIFICITY</scope>
    <scope>DEVELOPMENTAL STAGE</scope>
    <scope>INDUCTION</scope>
    <source>
        <tissue evidence="4">Embryo</tissue>
    </source>
</reference>
<reference evidence="8" key="3">
    <citation type="journal article" date="2004" name="Biochem. Biophys. Res. Commun.">
        <title>A downstream enhancer is essential for Xenopus FoxD5 transcription.</title>
        <authorList>
            <person name="Schoen C."/>
            <person name="Koester M."/>
            <person name="Knoechel W."/>
        </authorList>
    </citation>
    <scope>NUCLEOTIDE SEQUENCE [GENOMIC DNA]</scope>
</reference>
<reference evidence="5" key="4">
    <citation type="journal article" date="2005" name="Gene">
        <title>Of fox and frogs: fox (fork head/winged helix) transcription factors in Xenopus development.</title>
        <authorList>
            <person name="Pohl B.S."/>
            <person name="Knoechel W."/>
        </authorList>
    </citation>
    <scope>REVIEW</scope>
</reference>
<keyword id="KW-0217">Developmental protein</keyword>
<keyword id="KW-0221">Differentiation</keyword>
<keyword id="KW-0238">DNA-binding</keyword>
<keyword id="KW-0524">Neurogenesis</keyword>
<keyword id="KW-0539">Nucleus</keyword>
<keyword id="KW-1185">Reference proteome</keyword>
<keyword id="KW-0678">Repressor</keyword>
<keyword id="KW-0804">Transcription</keyword>
<keyword id="KW-0805">Transcription regulation</keyword>
<proteinExistence type="evidence at transcript level"/>
<name>FXD5A_XENLA</name>
<gene>
    <name type="primary">foxd5-a</name>
    <name evidence="8" type="synonym">foxd5a</name>
</gene>
<organism>
    <name type="scientific">Xenopus laevis</name>
    <name type="common">African clawed frog</name>
    <dbReference type="NCBI Taxonomy" id="8355"/>
    <lineage>
        <taxon>Eukaryota</taxon>
        <taxon>Metazoa</taxon>
        <taxon>Chordata</taxon>
        <taxon>Craniata</taxon>
        <taxon>Vertebrata</taxon>
        <taxon>Euteleostomi</taxon>
        <taxon>Amphibia</taxon>
        <taxon>Batrachia</taxon>
        <taxon>Anura</taxon>
        <taxon>Pipoidea</taxon>
        <taxon>Pipidae</taxon>
        <taxon>Xenopodinae</taxon>
        <taxon>Xenopus</taxon>
        <taxon>Xenopus</taxon>
    </lineage>
</organism>
<sequence length="352" mass="39719">MSFSQESGAHHHPQDYAGLSDEEDEIDILGEDDPCSLKSHFYLQPTHSVMGDSEMLSPSKLSCTESESDSSGESEGGTSKDSSTTPTGSKAKRTLVKPPYSYIALITMAILQSPHKKLTLSGICDFISSKFPYYKDKFPAWQNSIRHNLSLNDCFIKIPREPGNPGKGNYWTLDPASEDMFDNGSFLRRRKRFKRHQQEFFKDGLMMYNSLPYYRPYSAIQPQPVLQQTSLTCMAIPETLPMSTHLAPYPDIKRKVSYPAQGVHRGFKAQDADNHPNNSQSKCSFSIENIMRKPKEPEPNIQSFNSHWNYNHVFQRPSSCLLPAVLNLSTGPLLANTQGARQYNLIQFPGCY</sequence>
<feature type="chain" id="PRO_0000259615" description="Forkhead box protein D5-A">
    <location>
        <begin position="1"/>
        <end position="352"/>
    </location>
</feature>
<feature type="DNA-binding region" description="Fork-head" evidence="1">
    <location>
        <begin position="97"/>
        <end position="191"/>
    </location>
</feature>
<feature type="region of interest" description="Disordered" evidence="2">
    <location>
        <begin position="1"/>
        <end position="32"/>
    </location>
</feature>
<feature type="region of interest" description="Disordered" evidence="2">
    <location>
        <begin position="54"/>
        <end position="92"/>
    </location>
</feature>
<feature type="compositionally biased region" description="Acidic residues" evidence="2">
    <location>
        <begin position="20"/>
        <end position="32"/>
    </location>
</feature>
<feature type="compositionally biased region" description="Low complexity" evidence="2">
    <location>
        <begin position="73"/>
        <end position="85"/>
    </location>
</feature>